<keyword id="KW-0963">Cytoplasm</keyword>
<keyword id="KW-0227">DNA damage</keyword>
<keyword id="KW-0233">DNA recombination</keyword>
<keyword id="KW-0234">DNA repair</keyword>
<keyword id="KW-0238">DNA-binding</keyword>
<protein>
    <recommendedName>
        <fullName evidence="1">Holliday junction branch migration complex subunit RuvA</fullName>
    </recommendedName>
</protein>
<accession>A9KF41</accession>
<gene>
    <name evidence="1" type="primary">ruvA</name>
    <name type="ordered locus">CBUD_0420</name>
</gene>
<organism>
    <name type="scientific">Coxiella burnetii (strain Dugway 5J108-111)</name>
    <dbReference type="NCBI Taxonomy" id="434922"/>
    <lineage>
        <taxon>Bacteria</taxon>
        <taxon>Pseudomonadati</taxon>
        <taxon>Pseudomonadota</taxon>
        <taxon>Gammaproteobacteria</taxon>
        <taxon>Legionellales</taxon>
        <taxon>Coxiellaceae</taxon>
        <taxon>Coxiella</taxon>
    </lineage>
</organism>
<sequence length="200" mass="22224">MIGHLRGIIVEKQPPYLLLEVAGVGYEITAPLSTFYHLPEPQKEILLYTHLIVREDAHTLYGFHNDHERRLFRALIKVNGVGPKLALAILSGIGPDEFVHCVLNQNIDQLVRIPGVGRKTAERLVIETKDGLSRWHTNDTPSPEGLRSSNTQPTQDAISALMALGYKPQEAKRAIDAIQKPDLSAETLIRLALKQMVLGT</sequence>
<reference key="1">
    <citation type="journal article" date="2009" name="Infect. Immun.">
        <title>Comparative genomics reveal extensive transposon-mediated genomic plasticity and diversity among potential effector proteins within the genus Coxiella.</title>
        <authorList>
            <person name="Beare P.A."/>
            <person name="Unsworth N."/>
            <person name="Andoh M."/>
            <person name="Voth D.E."/>
            <person name="Omsland A."/>
            <person name="Gilk S.D."/>
            <person name="Williams K.P."/>
            <person name="Sobral B.W."/>
            <person name="Kupko J.J. III"/>
            <person name="Porcella S.F."/>
            <person name="Samuel J.E."/>
            <person name="Heinzen R.A."/>
        </authorList>
    </citation>
    <scope>NUCLEOTIDE SEQUENCE [LARGE SCALE GENOMIC DNA]</scope>
    <source>
        <strain>Dugway 5J108-111</strain>
    </source>
</reference>
<evidence type="ECO:0000255" key="1">
    <source>
        <dbReference type="HAMAP-Rule" id="MF_00031"/>
    </source>
</evidence>
<evidence type="ECO:0000256" key="2">
    <source>
        <dbReference type="SAM" id="MobiDB-lite"/>
    </source>
</evidence>
<comment type="function">
    <text evidence="1">The RuvA-RuvB-RuvC complex processes Holliday junction (HJ) DNA during genetic recombination and DNA repair, while the RuvA-RuvB complex plays an important role in the rescue of blocked DNA replication forks via replication fork reversal (RFR). RuvA specifically binds to HJ cruciform DNA, conferring on it an open structure. The RuvB hexamer acts as an ATP-dependent pump, pulling dsDNA into and through the RuvAB complex. HJ branch migration allows RuvC to scan DNA until it finds its consensus sequence, where it cleaves and resolves the cruciform DNA.</text>
</comment>
<comment type="subunit">
    <text evidence="1">Homotetramer. Forms an RuvA(8)-RuvB(12)-Holliday junction (HJ) complex. HJ DNA is sandwiched between 2 RuvA tetramers; dsDNA enters through RuvA and exits via RuvB. An RuvB hexamer assembles on each DNA strand where it exits the tetramer. Each RuvB hexamer is contacted by two RuvA subunits (via domain III) on 2 adjacent RuvB subunits; this complex drives branch migration. In the full resolvosome a probable DNA-RuvA(4)-RuvB(12)-RuvC(2) complex forms which resolves the HJ.</text>
</comment>
<comment type="subcellular location">
    <subcellularLocation>
        <location evidence="1">Cytoplasm</location>
    </subcellularLocation>
</comment>
<comment type="domain">
    <text evidence="1">Has three domains with a flexible linker between the domains II and III and assumes an 'L' shape. Domain III is highly mobile and contacts RuvB.</text>
</comment>
<comment type="similarity">
    <text evidence="1">Belongs to the RuvA family.</text>
</comment>
<proteinExistence type="inferred from homology"/>
<dbReference type="EMBL" id="CP000733">
    <property type="protein sequence ID" value="ABS78453.1"/>
    <property type="molecule type" value="Genomic_DNA"/>
</dbReference>
<dbReference type="RefSeq" id="WP_011996570.1">
    <property type="nucleotide sequence ID" value="NC_009727.1"/>
</dbReference>
<dbReference type="SMR" id="A9KF41"/>
<dbReference type="KEGG" id="cbd:CBUD_0420"/>
<dbReference type="HOGENOM" id="CLU_087936_0_0_6"/>
<dbReference type="Proteomes" id="UP000008555">
    <property type="component" value="Chromosome"/>
</dbReference>
<dbReference type="GO" id="GO:0005737">
    <property type="term" value="C:cytoplasm"/>
    <property type="evidence" value="ECO:0007669"/>
    <property type="project" value="UniProtKB-SubCell"/>
</dbReference>
<dbReference type="GO" id="GO:0009379">
    <property type="term" value="C:Holliday junction helicase complex"/>
    <property type="evidence" value="ECO:0007669"/>
    <property type="project" value="InterPro"/>
</dbReference>
<dbReference type="GO" id="GO:0048476">
    <property type="term" value="C:Holliday junction resolvase complex"/>
    <property type="evidence" value="ECO:0007669"/>
    <property type="project" value="UniProtKB-UniRule"/>
</dbReference>
<dbReference type="GO" id="GO:0005524">
    <property type="term" value="F:ATP binding"/>
    <property type="evidence" value="ECO:0007669"/>
    <property type="project" value="InterPro"/>
</dbReference>
<dbReference type="GO" id="GO:0000400">
    <property type="term" value="F:four-way junction DNA binding"/>
    <property type="evidence" value="ECO:0007669"/>
    <property type="project" value="UniProtKB-UniRule"/>
</dbReference>
<dbReference type="GO" id="GO:0009378">
    <property type="term" value="F:four-way junction helicase activity"/>
    <property type="evidence" value="ECO:0007669"/>
    <property type="project" value="InterPro"/>
</dbReference>
<dbReference type="GO" id="GO:0006310">
    <property type="term" value="P:DNA recombination"/>
    <property type="evidence" value="ECO:0007669"/>
    <property type="project" value="UniProtKB-UniRule"/>
</dbReference>
<dbReference type="GO" id="GO:0006281">
    <property type="term" value="P:DNA repair"/>
    <property type="evidence" value="ECO:0007669"/>
    <property type="project" value="UniProtKB-UniRule"/>
</dbReference>
<dbReference type="CDD" id="cd14332">
    <property type="entry name" value="UBA_RuvA_C"/>
    <property type="match status" value="1"/>
</dbReference>
<dbReference type="Gene3D" id="1.10.150.20">
    <property type="entry name" value="5' to 3' exonuclease, C-terminal subdomain"/>
    <property type="match status" value="1"/>
</dbReference>
<dbReference type="Gene3D" id="1.10.8.10">
    <property type="entry name" value="DNA helicase RuvA subunit, C-terminal domain"/>
    <property type="match status" value="1"/>
</dbReference>
<dbReference type="Gene3D" id="2.40.50.140">
    <property type="entry name" value="Nucleic acid-binding proteins"/>
    <property type="match status" value="1"/>
</dbReference>
<dbReference type="HAMAP" id="MF_00031">
    <property type="entry name" value="DNA_HJ_migration_RuvA"/>
    <property type="match status" value="1"/>
</dbReference>
<dbReference type="InterPro" id="IPR013849">
    <property type="entry name" value="DNA_helicase_Holl-junc_RuvA_I"/>
</dbReference>
<dbReference type="InterPro" id="IPR003583">
    <property type="entry name" value="Hlx-hairpin-Hlx_DNA-bd_motif"/>
</dbReference>
<dbReference type="InterPro" id="IPR012340">
    <property type="entry name" value="NA-bd_OB-fold"/>
</dbReference>
<dbReference type="InterPro" id="IPR000085">
    <property type="entry name" value="RuvA"/>
</dbReference>
<dbReference type="InterPro" id="IPR010994">
    <property type="entry name" value="RuvA_2-like"/>
</dbReference>
<dbReference type="InterPro" id="IPR011114">
    <property type="entry name" value="RuvA_C"/>
</dbReference>
<dbReference type="InterPro" id="IPR036267">
    <property type="entry name" value="RuvA_C_sf"/>
</dbReference>
<dbReference type="NCBIfam" id="TIGR00084">
    <property type="entry name" value="ruvA"/>
    <property type="match status" value="1"/>
</dbReference>
<dbReference type="Pfam" id="PF14520">
    <property type="entry name" value="HHH_5"/>
    <property type="match status" value="1"/>
</dbReference>
<dbReference type="Pfam" id="PF07499">
    <property type="entry name" value="RuvA_C"/>
    <property type="match status" value="1"/>
</dbReference>
<dbReference type="Pfam" id="PF01330">
    <property type="entry name" value="RuvA_N"/>
    <property type="match status" value="1"/>
</dbReference>
<dbReference type="SMART" id="SM00278">
    <property type="entry name" value="HhH1"/>
    <property type="match status" value="2"/>
</dbReference>
<dbReference type="SUPFAM" id="SSF46929">
    <property type="entry name" value="DNA helicase RuvA subunit, C-terminal domain"/>
    <property type="match status" value="1"/>
</dbReference>
<dbReference type="SUPFAM" id="SSF50249">
    <property type="entry name" value="Nucleic acid-binding proteins"/>
    <property type="match status" value="1"/>
</dbReference>
<dbReference type="SUPFAM" id="SSF47781">
    <property type="entry name" value="RuvA domain 2-like"/>
    <property type="match status" value="1"/>
</dbReference>
<name>RUVA_COXBN</name>
<feature type="chain" id="PRO_1000074418" description="Holliday junction branch migration complex subunit RuvA">
    <location>
        <begin position="1"/>
        <end position="200"/>
    </location>
</feature>
<feature type="region of interest" description="Domain I" evidence="1">
    <location>
        <begin position="1"/>
        <end position="64"/>
    </location>
</feature>
<feature type="region of interest" description="Domain II" evidence="1">
    <location>
        <begin position="65"/>
        <end position="143"/>
    </location>
</feature>
<feature type="region of interest" description="Disordered" evidence="2">
    <location>
        <begin position="133"/>
        <end position="152"/>
    </location>
</feature>
<feature type="region of interest" description="Flexible linker" evidence="1">
    <location>
        <begin position="144"/>
        <end position="148"/>
    </location>
</feature>
<feature type="region of interest" description="Domain III" evidence="1">
    <location>
        <begin position="149"/>
        <end position="200"/>
    </location>
</feature>